<comment type="function">
    <text evidence="1">Catalyzes the reversible interconversion of serine and glycine with tetrahydrofolate (THF) serving as the one-carbon carrier. This reaction serves as the major source of one-carbon groups required for the biosynthesis of purines, thymidylate, methionine, and other important biomolecules. Also exhibits THF-independent aldolase activity toward beta-hydroxyamino acids, producing glycine and aldehydes, via a retro-aldol mechanism.</text>
</comment>
<comment type="catalytic activity">
    <reaction evidence="1">
        <text>(6R)-5,10-methylene-5,6,7,8-tetrahydrofolate + glycine + H2O = (6S)-5,6,7,8-tetrahydrofolate + L-serine</text>
        <dbReference type="Rhea" id="RHEA:15481"/>
        <dbReference type="ChEBI" id="CHEBI:15377"/>
        <dbReference type="ChEBI" id="CHEBI:15636"/>
        <dbReference type="ChEBI" id="CHEBI:33384"/>
        <dbReference type="ChEBI" id="CHEBI:57305"/>
        <dbReference type="ChEBI" id="CHEBI:57453"/>
        <dbReference type="EC" id="2.1.2.1"/>
    </reaction>
</comment>
<comment type="cofactor">
    <cofactor evidence="1">
        <name>pyridoxal 5'-phosphate</name>
        <dbReference type="ChEBI" id="CHEBI:597326"/>
    </cofactor>
</comment>
<comment type="pathway">
    <text evidence="1">One-carbon metabolism; tetrahydrofolate interconversion.</text>
</comment>
<comment type="pathway">
    <text evidence="1">Amino-acid biosynthesis; glycine biosynthesis; glycine from L-serine: step 1/1.</text>
</comment>
<comment type="subunit">
    <text evidence="1">Homodimer.</text>
</comment>
<comment type="subcellular location">
    <subcellularLocation>
        <location evidence="1">Cytoplasm</location>
    </subcellularLocation>
</comment>
<comment type="similarity">
    <text evidence="1">Belongs to the SHMT family.</text>
</comment>
<proteinExistence type="inferred from homology"/>
<name>GLYA_ORITI</name>
<feature type="chain" id="PRO_0000369944" description="Serine hydroxymethyltransferase">
    <location>
        <begin position="1"/>
        <end position="426"/>
    </location>
</feature>
<feature type="binding site" evidence="1">
    <location>
        <position position="111"/>
    </location>
    <ligand>
        <name>(6S)-5,6,7,8-tetrahydrofolate</name>
        <dbReference type="ChEBI" id="CHEBI:57453"/>
    </ligand>
</feature>
<feature type="binding site" evidence="1">
    <location>
        <begin position="115"/>
        <end position="117"/>
    </location>
    <ligand>
        <name>(6S)-5,6,7,8-tetrahydrofolate</name>
        <dbReference type="ChEBI" id="CHEBI:57453"/>
    </ligand>
</feature>
<feature type="site" description="Plays an important role in substrate specificity" evidence="1">
    <location>
        <position position="219"/>
    </location>
</feature>
<feature type="modified residue" description="N6-(pyridoxal phosphate)lysine" evidence="1">
    <location>
        <position position="220"/>
    </location>
</feature>
<protein>
    <recommendedName>
        <fullName evidence="1">Serine hydroxymethyltransferase</fullName>
        <shortName evidence="1">SHMT</shortName>
        <shortName evidence="1">Serine methylase</shortName>
        <ecNumber evidence="1">2.1.2.1</ecNumber>
    </recommendedName>
</protein>
<keyword id="KW-0028">Amino-acid biosynthesis</keyword>
<keyword id="KW-0963">Cytoplasm</keyword>
<keyword id="KW-0554">One-carbon metabolism</keyword>
<keyword id="KW-0663">Pyridoxal phosphate</keyword>
<keyword id="KW-0808">Transferase</keyword>
<accession>B3CTZ1</accession>
<organism>
    <name type="scientific">Orientia tsutsugamushi (strain Ikeda)</name>
    <name type="common">Rickettsia tsutsugamushi</name>
    <dbReference type="NCBI Taxonomy" id="334380"/>
    <lineage>
        <taxon>Bacteria</taxon>
        <taxon>Pseudomonadati</taxon>
        <taxon>Pseudomonadota</taxon>
        <taxon>Alphaproteobacteria</taxon>
        <taxon>Rickettsiales</taxon>
        <taxon>Rickettsiaceae</taxon>
        <taxon>Rickettsieae</taxon>
        <taxon>Orientia</taxon>
    </lineage>
</organism>
<sequence length="426" mass="46948">MCKEIYDLIAKELYRQQSTIELIASENFTSKAVMLAQGSILTNKYAEGYINKRYYGGCEFIDEVESLAIDKVKKLFKCNYANVQPHSGSQANQAVFLALLKPGDTILAMDLNSGGHLTHGAKPNLSGKFFNAVHYCVNKDSYLIDYNEVEMLAQQHKPKLIIVGYSAYSRKINFATFKEIADKVGAYLLADIAHIAGLVATEYHSSPIPYAHVVTSTTHKTLRGPRGGLILTNDESISKKINSAVFPGMQGGPLMHVIAAKAIAFSEALMPQYKEYINQVMLNAKVLAKLLQDRGYNILTGGTDNHMLLVDLRGKNITGQEAEYLLDAAGITCNKQVMPFDTTSPTITSGIRLGTPACTTRGFKENDFITVGKYIADILDNIAIIKSAKKNEDITITEIENSLDSVITHTKQHVQELCNSFPIYTN</sequence>
<evidence type="ECO:0000255" key="1">
    <source>
        <dbReference type="HAMAP-Rule" id="MF_00051"/>
    </source>
</evidence>
<gene>
    <name evidence="1" type="primary">glyA</name>
    <name type="ordered locus">OTT_1380</name>
</gene>
<reference key="1">
    <citation type="journal article" date="2008" name="DNA Res.">
        <title>The whole-genome sequencing of the obligate intracellular bacterium Orientia tsutsugamushi revealed massive gene amplification during reductive genome evolution.</title>
        <authorList>
            <person name="Nakayama K."/>
            <person name="Yamashita A."/>
            <person name="Kurokawa K."/>
            <person name="Morimoto T."/>
            <person name="Ogawa M."/>
            <person name="Fukuhara M."/>
            <person name="Urakami H."/>
            <person name="Ohnishi M."/>
            <person name="Uchiyama I."/>
            <person name="Ogura Y."/>
            <person name="Ooka T."/>
            <person name="Oshima K."/>
            <person name="Tamura A."/>
            <person name="Hattori M."/>
            <person name="Hayashi T."/>
        </authorList>
    </citation>
    <scope>NUCLEOTIDE SEQUENCE [LARGE SCALE GENOMIC DNA]</scope>
    <source>
        <strain>Ikeda</strain>
    </source>
</reference>
<dbReference type="EC" id="2.1.2.1" evidence="1"/>
<dbReference type="EMBL" id="AP008981">
    <property type="protein sequence ID" value="BAG40838.1"/>
    <property type="molecule type" value="Genomic_DNA"/>
</dbReference>
<dbReference type="RefSeq" id="WP_012461880.1">
    <property type="nucleotide sequence ID" value="NC_010793.1"/>
</dbReference>
<dbReference type="SMR" id="B3CTZ1"/>
<dbReference type="KEGG" id="ott:OTT_1380"/>
<dbReference type="HOGENOM" id="CLU_022477_2_1_5"/>
<dbReference type="OrthoDB" id="9803846at2"/>
<dbReference type="UniPathway" id="UPA00193"/>
<dbReference type="UniPathway" id="UPA00288">
    <property type="reaction ID" value="UER01023"/>
</dbReference>
<dbReference type="Proteomes" id="UP000001033">
    <property type="component" value="Chromosome"/>
</dbReference>
<dbReference type="GO" id="GO:0005829">
    <property type="term" value="C:cytosol"/>
    <property type="evidence" value="ECO:0007669"/>
    <property type="project" value="TreeGrafter"/>
</dbReference>
<dbReference type="GO" id="GO:0004372">
    <property type="term" value="F:glycine hydroxymethyltransferase activity"/>
    <property type="evidence" value="ECO:0007669"/>
    <property type="project" value="UniProtKB-UniRule"/>
</dbReference>
<dbReference type="GO" id="GO:0030170">
    <property type="term" value="F:pyridoxal phosphate binding"/>
    <property type="evidence" value="ECO:0007669"/>
    <property type="project" value="UniProtKB-UniRule"/>
</dbReference>
<dbReference type="GO" id="GO:0019264">
    <property type="term" value="P:glycine biosynthetic process from serine"/>
    <property type="evidence" value="ECO:0007669"/>
    <property type="project" value="UniProtKB-UniRule"/>
</dbReference>
<dbReference type="GO" id="GO:0035999">
    <property type="term" value="P:tetrahydrofolate interconversion"/>
    <property type="evidence" value="ECO:0007669"/>
    <property type="project" value="UniProtKB-UniRule"/>
</dbReference>
<dbReference type="CDD" id="cd00378">
    <property type="entry name" value="SHMT"/>
    <property type="match status" value="1"/>
</dbReference>
<dbReference type="FunFam" id="3.40.640.10:FF:000001">
    <property type="entry name" value="Serine hydroxymethyltransferase"/>
    <property type="match status" value="1"/>
</dbReference>
<dbReference type="Gene3D" id="3.90.1150.10">
    <property type="entry name" value="Aspartate Aminotransferase, domain 1"/>
    <property type="match status" value="1"/>
</dbReference>
<dbReference type="Gene3D" id="3.40.640.10">
    <property type="entry name" value="Type I PLP-dependent aspartate aminotransferase-like (Major domain)"/>
    <property type="match status" value="1"/>
</dbReference>
<dbReference type="HAMAP" id="MF_00051">
    <property type="entry name" value="SHMT"/>
    <property type="match status" value="1"/>
</dbReference>
<dbReference type="InterPro" id="IPR015424">
    <property type="entry name" value="PyrdxlP-dep_Trfase"/>
</dbReference>
<dbReference type="InterPro" id="IPR015421">
    <property type="entry name" value="PyrdxlP-dep_Trfase_major"/>
</dbReference>
<dbReference type="InterPro" id="IPR015422">
    <property type="entry name" value="PyrdxlP-dep_Trfase_small"/>
</dbReference>
<dbReference type="InterPro" id="IPR001085">
    <property type="entry name" value="Ser_HO-MeTrfase"/>
</dbReference>
<dbReference type="InterPro" id="IPR049943">
    <property type="entry name" value="Ser_HO-MeTrfase-like"/>
</dbReference>
<dbReference type="InterPro" id="IPR019798">
    <property type="entry name" value="Ser_HO-MeTrfase_PLP_BS"/>
</dbReference>
<dbReference type="InterPro" id="IPR039429">
    <property type="entry name" value="SHMT-like_dom"/>
</dbReference>
<dbReference type="NCBIfam" id="NF000586">
    <property type="entry name" value="PRK00011.1"/>
    <property type="match status" value="1"/>
</dbReference>
<dbReference type="PANTHER" id="PTHR11680">
    <property type="entry name" value="SERINE HYDROXYMETHYLTRANSFERASE"/>
    <property type="match status" value="1"/>
</dbReference>
<dbReference type="PANTHER" id="PTHR11680:SF35">
    <property type="entry name" value="SERINE HYDROXYMETHYLTRANSFERASE 1"/>
    <property type="match status" value="1"/>
</dbReference>
<dbReference type="Pfam" id="PF00464">
    <property type="entry name" value="SHMT"/>
    <property type="match status" value="1"/>
</dbReference>
<dbReference type="PIRSF" id="PIRSF000412">
    <property type="entry name" value="SHMT"/>
    <property type="match status" value="1"/>
</dbReference>
<dbReference type="SUPFAM" id="SSF53383">
    <property type="entry name" value="PLP-dependent transferases"/>
    <property type="match status" value="1"/>
</dbReference>
<dbReference type="PROSITE" id="PS00096">
    <property type="entry name" value="SHMT"/>
    <property type="match status" value="1"/>
</dbReference>